<protein>
    <recommendedName>
        <fullName evidence="1">Nicotinate-nucleotide--dimethylbenzimidazole phosphoribosyltransferase</fullName>
        <shortName evidence="1">NN:DBI PRT</shortName>
        <ecNumber evidence="1">2.4.2.21</ecNumber>
    </recommendedName>
    <alternativeName>
        <fullName evidence="1">N(1)-alpha-phosphoribosyltransferase</fullName>
    </alternativeName>
</protein>
<proteinExistence type="inferred from homology"/>
<organism>
    <name type="scientific">Pseudomonas savastanoi pv. phaseolicola (strain 1448A / Race 6)</name>
    <name type="common">Pseudomonas syringae pv. phaseolicola (strain 1448A / Race 6)</name>
    <dbReference type="NCBI Taxonomy" id="264730"/>
    <lineage>
        <taxon>Bacteria</taxon>
        <taxon>Pseudomonadati</taxon>
        <taxon>Pseudomonadota</taxon>
        <taxon>Gammaproteobacteria</taxon>
        <taxon>Pseudomonadales</taxon>
        <taxon>Pseudomonadaceae</taxon>
        <taxon>Pseudomonas</taxon>
    </lineage>
</organism>
<evidence type="ECO:0000255" key="1">
    <source>
        <dbReference type="HAMAP-Rule" id="MF_00230"/>
    </source>
</evidence>
<dbReference type="EC" id="2.4.2.21" evidence="1"/>
<dbReference type="EMBL" id="CP000058">
    <property type="protein sequence ID" value="AAZ33980.1"/>
    <property type="molecule type" value="Genomic_DNA"/>
</dbReference>
<dbReference type="RefSeq" id="WP_011169236.1">
    <property type="nucleotide sequence ID" value="NC_005773.3"/>
</dbReference>
<dbReference type="SMR" id="Q48FJ9"/>
<dbReference type="KEGG" id="psp:PSPPH_3695"/>
<dbReference type="eggNOG" id="COG2038">
    <property type="taxonomic scope" value="Bacteria"/>
</dbReference>
<dbReference type="HOGENOM" id="CLU_002982_0_1_6"/>
<dbReference type="UniPathway" id="UPA00061">
    <property type="reaction ID" value="UER00516"/>
</dbReference>
<dbReference type="Proteomes" id="UP000000551">
    <property type="component" value="Chromosome"/>
</dbReference>
<dbReference type="GO" id="GO:0008939">
    <property type="term" value="F:nicotinate-nucleotide-dimethylbenzimidazole phosphoribosyltransferase activity"/>
    <property type="evidence" value="ECO:0007669"/>
    <property type="project" value="UniProtKB-UniRule"/>
</dbReference>
<dbReference type="GO" id="GO:0009236">
    <property type="term" value="P:cobalamin biosynthetic process"/>
    <property type="evidence" value="ECO:0007669"/>
    <property type="project" value="UniProtKB-KW"/>
</dbReference>
<dbReference type="CDD" id="cd02439">
    <property type="entry name" value="DMB-PRT_CobT"/>
    <property type="match status" value="1"/>
</dbReference>
<dbReference type="FunFam" id="3.40.50.10210:FF:000001">
    <property type="entry name" value="Nicotinate-nucleotide--dimethylbenzimidazole phosphoribosyltransferase"/>
    <property type="match status" value="1"/>
</dbReference>
<dbReference type="Gene3D" id="1.10.1610.10">
    <property type="match status" value="1"/>
</dbReference>
<dbReference type="Gene3D" id="3.40.50.10210">
    <property type="match status" value="1"/>
</dbReference>
<dbReference type="HAMAP" id="MF_00230">
    <property type="entry name" value="CobT"/>
    <property type="match status" value="1"/>
</dbReference>
<dbReference type="InterPro" id="IPR003200">
    <property type="entry name" value="Nict_dMeBzImd_PRibTrfase"/>
</dbReference>
<dbReference type="InterPro" id="IPR017846">
    <property type="entry name" value="Nict_dMeBzImd_PRibTrfase_bact"/>
</dbReference>
<dbReference type="InterPro" id="IPR023195">
    <property type="entry name" value="Nict_dMeBzImd_PRibTrfase_N"/>
</dbReference>
<dbReference type="InterPro" id="IPR036087">
    <property type="entry name" value="Nict_dMeBzImd_PRibTrfase_sf"/>
</dbReference>
<dbReference type="NCBIfam" id="TIGR03160">
    <property type="entry name" value="cobT_DBIPRT"/>
    <property type="match status" value="1"/>
</dbReference>
<dbReference type="NCBIfam" id="NF000996">
    <property type="entry name" value="PRK00105.1"/>
    <property type="match status" value="1"/>
</dbReference>
<dbReference type="PANTHER" id="PTHR43463">
    <property type="entry name" value="NICOTINATE-NUCLEOTIDE--DIMETHYLBENZIMIDAZOLE PHOSPHORIBOSYLTRANSFERASE"/>
    <property type="match status" value="1"/>
</dbReference>
<dbReference type="PANTHER" id="PTHR43463:SF1">
    <property type="entry name" value="NICOTINATE-NUCLEOTIDE--DIMETHYLBENZIMIDAZOLE PHOSPHORIBOSYLTRANSFERASE"/>
    <property type="match status" value="1"/>
</dbReference>
<dbReference type="Pfam" id="PF02277">
    <property type="entry name" value="DBI_PRT"/>
    <property type="match status" value="1"/>
</dbReference>
<dbReference type="SUPFAM" id="SSF52733">
    <property type="entry name" value="Nicotinate mononucleotide:5,6-dimethylbenzimidazole phosphoribosyltransferase (CobT)"/>
    <property type="match status" value="1"/>
</dbReference>
<keyword id="KW-0169">Cobalamin biosynthesis</keyword>
<keyword id="KW-0328">Glycosyltransferase</keyword>
<keyword id="KW-0808">Transferase</keyword>
<reference key="1">
    <citation type="journal article" date="2005" name="J. Bacteriol.">
        <title>Whole-genome sequence analysis of Pseudomonas syringae pv. phaseolicola 1448A reveals divergence among pathovars in genes involved in virulence and transposition.</title>
        <authorList>
            <person name="Joardar V."/>
            <person name="Lindeberg M."/>
            <person name="Jackson R.W."/>
            <person name="Selengut J."/>
            <person name="Dodson R."/>
            <person name="Brinkac L.M."/>
            <person name="Daugherty S.C."/>
            <person name="DeBoy R.T."/>
            <person name="Durkin A.S."/>
            <person name="Gwinn Giglio M."/>
            <person name="Madupu R."/>
            <person name="Nelson W.C."/>
            <person name="Rosovitz M.J."/>
            <person name="Sullivan S.A."/>
            <person name="Crabtree J."/>
            <person name="Creasy T."/>
            <person name="Davidsen T.M."/>
            <person name="Haft D.H."/>
            <person name="Zafar N."/>
            <person name="Zhou L."/>
            <person name="Halpin R."/>
            <person name="Holley T."/>
            <person name="Khouri H.M."/>
            <person name="Feldblyum T.V."/>
            <person name="White O."/>
            <person name="Fraser C.M."/>
            <person name="Chatterjee A.K."/>
            <person name="Cartinhour S."/>
            <person name="Schneider D."/>
            <person name="Mansfield J.W."/>
            <person name="Collmer A."/>
            <person name="Buell R."/>
        </authorList>
    </citation>
    <scope>NUCLEOTIDE SEQUENCE [LARGE SCALE GENOMIC DNA]</scope>
    <source>
        <strain>1448A / Race 6</strain>
    </source>
</reference>
<sequence length="350" mass="36193">MSNSWWLKPAQAIDVPMREAALARQQQLTKPAGSLAQLERLAVQLAGLQGRERPAADKLWIAIFAGDHGVVAEGVSAYPQEVTGQMLHNFVNGGAAISVLARQLSAQLDVVDLGTVAPLDLPGVRHLRIGAGTANFAHGPAMSAEQGLAALQAGRDSVLRAKAVGTELFIGGEMGIGNTTAASAVACSVLECAAPLLVGPGTGLNAEGIEHKTRVIERALALHAEQAGDPLHSLFCLGGFEIAALTGAYLACAQEGIVALVDGFICSVAALVAVRLNPSCRNWLLFGHRGAEPGHRHLLETLQAEPLLDLGLRLGEGSGAALAVPLVRLACELHNGMATFAEAAVADRPA</sequence>
<name>COBT_PSE14</name>
<comment type="function">
    <text evidence="1">Catalyzes the synthesis of alpha-ribazole-5'-phosphate from nicotinate mononucleotide (NAMN) and 5,6-dimethylbenzimidazole (DMB).</text>
</comment>
<comment type="catalytic activity">
    <reaction evidence="1">
        <text>5,6-dimethylbenzimidazole + nicotinate beta-D-ribonucleotide = alpha-ribazole 5'-phosphate + nicotinate + H(+)</text>
        <dbReference type="Rhea" id="RHEA:11196"/>
        <dbReference type="ChEBI" id="CHEBI:15378"/>
        <dbReference type="ChEBI" id="CHEBI:15890"/>
        <dbReference type="ChEBI" id="CHEBI:32544"/>
        <dbReference type="ChEBI" id="CHEBI:57502"/>
        <dbReference type="ChEBI" id="CHEBI:57918"/>
        <dbReference type="EC" id="2.4.2.21"/>
    </reaction>
</comment>
<comment type="pathway">
    <text evidence="1">Nucleoside biosynthesis; alpha-ribazole biosynthesis; alpha-ribazole from 5,6-dimethylbenzimidazole: step 1/2.</text>
</comment>
<comment type="similarity">
    <text evidence="1">Belongs to the CobT family.</text>
</comment>
<gene>
    <name evidence="1" type="primary">cobT</name>
    <name type="ordered locus">PSPPH_3695</name>
</gene>
<accession>Q48FJ9</accession>
<feature type="chain" id="PRO_1000021611" description="Nicotinate-nucleotide--dimethylbenzimidazole phosphoribosyltransferase">
    <location>
        <begin position="1"/>
        <end position="350"/>
    </location>
</feature>
<feature type="active site" description="Proton acceptor" evidence="1">
    <location>
        <position position="316"/>
    </location>
</feature>